<reference key="1">
    <citation type="journal article" date="2011" name="Stand. Genomic Sci.">
        <title>Complete genome sequence of the filamentous gliding predatory bacterium Herpetosiphon aurantiacus type strain (114-95(T)).</title>
        <authorList>
            <person name="Kiss H."/>
            <person name="Nett M."/>
            <person name="Domin N."/>
            <person name="Martin K."/>
            <person name="Maresca J.A."/>
            <person name="Copeland A."/>
            <person name="Lapidus A."/>
            <person name="Lucas S."/>
            <person name="Berry K.W."/>
            <person name="Glavina Del Rio T."/>
            <person name="Dalin E."/>
            <person name="Tice H."/>
            <person name="Pitluck S."/>
            <person name="Richardson P."/>
            <person name="Bruce D."/>
            <person name="Goodwin L."/>
            <person name="Han C."/>
            <person name="Detter J.C."/>
            <person name="Schmutz J."/>
            <person name="Brettin T."/>
            <person name="Land M."/>
            <person name="Hauser L."/>
            <person name="Kyrpides N.C."/>
            <person name="Ivanova N."/>
            <person name="Goeker M."/>
            <person name="Woyke T."/>
            <person name="Klenk H.P."/>
            <person name="Bryant D.A."/>
        </authorList>
    </citation>
    <scope>NUCLEOTIDE SEQUENCE [LARGE SCALE GENOMIC DNA]</scope>
    <source>
        <strain>ATCC 23779 / DSM 785 / 114-95</strain>
    </source>
</reference>
<dbReference type="EMBL" id="CP000875">
    <property type="protein sequence ID" value="ABX06558.1"/>
    <property type="molecule type" value="Genomic_DNA"/>
</dbReference>
<dbReference type="SMR" id="A9AUX0"/>
<dbReference type="FunCoup" id="A9AUX0">
    <property type="interactions" value="272"/>
</dbReference>
<dbReference type="STRING" id="316274.Haur_3924"/>
<dbReference type="KEGG" id="hau:Haur_3924"/>
<dbReference type="eggNOG" id="COG0353">
    <property type="taxonomic scope" value="Bacteria"/>
</dbReference>
<dbReference type="HOGENOM" id="CLU_060739_1_0_0"/>
<dbReference type="InParanoid" id="A9AUX0"/>
<dbReference type="Proteomes" id="UP000000787">
    <property type="component" value="Chromosome"/>
</dbReference>
<dbReference type="GO" id="GO:0003677">
    <property type="term" value="F:DNA binding"/>
    <property type="evidence" value="ECO:0007669"/>
    <property type="project" value="UniProtKB-UniRule"/>
</dbReference>
<dbReference type="GO" id="GO:0008270">
    <property type="term" value="F:zinc ion binding"/>
    <property type="evidence" value="ECO:0007669"/>
    <property type="project" value="UniProtKB-KW"/>
</dbReference>
<dbReference type="GO" id="GO:0006310">
    <property type="term" value="P:DNA recombination"/>
    <property type="evidence" value="ECO:0007669"/>
    <property type="project" value="UniProtKB-UniRule"/>
</dbReference>
<dbReference type="GO" id="GO:0006281">
    <property type="term" value="P:DNA repair"/>
    <property type="evidence" value="ECO:0007669"/>
    <property type="project" value="UniProtKB-UniRule"/>
</dbReference>
<dbReference type="CDD" id="cd01025">
    <property type="entry name" value="TOPRIM_recR"/>
    <property type="match status" value="1"/>
</dbReference>
<dbReference type="Gene3D" id="3.40.1360.10">
    <property type="match status" value="1"/>
</dbReference>
<dbReference type="Gene3D" id="6.10.250.240">
    <property type="match status" value="1"/>
</dbReference>
<dbReference type="Gene3D" id="1.10.8.420">
    <property type="entry name" value="RecR Domain 1"/>
    <property type="match status" value="1"/>
</dbReference>
<dbReference type="HAMAP" id="MF_00017">
    <property type="entry name" value="RecR"/>
    <property type="match status" value="1"/>
</dbReference>
<dbReference type="InterPro" id="IPR000093">
    <property type="entry name" value="DNA_Rcmb_RecR"/>
</dbReference>
<dbReference type="InterPro" id="IPR023627">
    <property type="entry name" value="Rcmb_RecR"/>
</dbReference>
<dbReference type="InterPro" id="IPR015967">
    <property type="entry name" value="Rcmb_RecR_Znf"/>
</dbReference>
<dbReference type="InterPro" id="IPR006171">
    <property type="entry name" value="TOPRIM_dom"/>
</dbReference>
<dbReference type="InterPro" id="IPR034137">
    <property type="entry name" value="TOPRIM_RecR"/>
</dbReference>
<dbReference type="NCBIfam" id="TIGR00615">
    <property type="entry name" value="recR"/>
    <property type="match status" value="1"/>
</dbReference>
<dbReference type="PANTHER" id="PTHR30446">
    <property type="entry name" value="RECOMBINATION PROTEIN RECR"/>
    <property type="match status" value="1"/>
</dbReference>
<dbReference type="PANTHER" id="PTHR30446:SF0">
    <property type="entry name" value="RECOMBINATION PROTEIN RECR"/>
    <property type="match status" value="1"/>
</dbReference>
<dbReference type="Pfam" id="PF21175">
    <property type="entry name" value="RecR_C"/>
    <property type="match status" value="1"/>
</dbReference>
<dbReference type="Pfam" id="PF21176">
    <property type="entry name" value="RecR_HhH"/>
    <property type="match status" value="1"/>
</dbReference>
<dbReference type="Pfam" id="PF02132">
    <property type="entry name" value="RecR_ZnF"/>
    <property type="match status" value="1"/>
</dbReference>
<dbReference type="Pfam" id="PF13662">
    <property type="entry name" value="Toprim_4"/>
    <property type="match status" value="1"/>
</dbReference>
<dbReference type="SMART" id="SM00493">
    <property type="entry name" value="TOPRIM"/>
    <property type="match status" value="1"/>
</dbReference>
<dbReference type="SUPFAM" id="SSF111304">
    <property type="entry name" value="Recombination protein RecR"/>
    <property type="match status" value="1"/>
</dbReference>
<dbReference type="PROSITE" id="PS01300">
    <property type="entry name" value="RECR"/>
    <property type="match status" value="1"/>
</dbReference>
<dbReference type="PROSITE" id="PS50880">
    <property type="entry name" value="TOPRIM"/>
    <property type="match status" value="1"/>
</dbReference>
<organism>
    <name type="scientific">Herpetosiphon aurantiacus (strain ATCC 23779 / DSM 785 / 114-95)</name>
    <dbReference type="NCBI Taxonomy" id="316274"/>
    <lineage>
        <taxon>Bacteria</taxon>
        <taxon>Bacillati</taxon>
        <taxon>Chloroflexota</taxon>
        <taxon>Chloroflexia</taxon>
        <taxon>Herpetosiphonales</taxon>
        <taxon>Herpetosiphonaceae</taxon>
        <taxon>Herpetosiphon</taxon>
    </lineage>
</organism>
<feature type="chain" id="PRO_1000089737" description="Recombination protein RecR">
    <location>
        <begin position="1"/>
        <end position="204"/>
    </location>
</feature>
<feature type="domain" description="Toprim" evidence="1">
    <location>
        <begin position="86"/>
        <end position="181"/>
    </location>
</feature>
<feature type="zinc finger region" description="C4-type" evidence="1">
    <location>
        <begin position="63"/>
        <end position="78"/>
    </location>
</feature>
<protein>
    <recommendedName>
        <fullName evidence="1">Recombination protein RecR</fullName>
    </recommendedName>
</protein>
<evidence type="ECO:0000255" key="1">
    <source>
        <dbReference type="HAMAP-Rule" id="MF_00017"/>
    </source>
</evidence>
<comment type="function">
    <text evidence="1">May play a role in DNA repair. It seems to be involved in an RecBC-independent recombinational process of DNA repair. It may act with RecF and RecO.</text>
</comment>
<comment type="similarity">
    <text evidence="1">Belongs to the RecR family.</text>
</comment>
<name>RECR_HERA2</name>
<keyword id="KW-0227">DNA damage</keyword>
<keyword id="KW-0233">DNA recombination</keyword>
<keyword id="KW-0234">DNA repair</keyword>
<keyword id="KW-0479">Metal-binding</keyword>
<keyword id="KW-0862">Zinc</keyword>
<keyword id="KW-0863">Zinc-finger</keyword>
<sequence length="204" mass="22796">MAFGYDTITPEPVAKLIDEFNRLPGIGPKSASRLVFYLLRAKREQSERLANAIMAMKDSTIFCNRCFNITVEDPCTICTNANRNERQVCVVEEPLDVVALERTGEFKGLYHVLHGAISPVEGINPEDLRIRELLARLRVEPIEEVILSTNPNLEGDATAAYLAREIIPLGIRVTRLARGLPMGSDLEYADEVTLGRALQGRREM</sequence>
<gene>
    <name evidence="1" type="primary">recR</name>
    <name type="ordered locus">Haur_3924</name>
</gene>
<proteinExistence type="inferred from homology"/>
<accession>A9AUX0</accession>